<keyword id="KW-0104">Cadmium</keyword>
<keyword id="KW-0238">DNA-binding</keyword>
<keyword id="KW-0539">Nucleus</keyword>
<keyword id="KW-1185">Reference proteome</keyword>
<keyword id="KW-0804">Transcription</keyword>
<keyword id="KW-0805">Transcription regulation</keyword>
<gene>
    <name type="primary">zip1</name>
    <name type="ORF">SPAC25G10.03</name>
</gene>
<sequence length="330" mass="36189">MDFTPNSAINHLNLKFDDVPVSDDFSKDDLAEQLNVFTNPYFLDLEPSSMLSEGYYGFVSQPSGSSNSNKQEKNVQQQNPEKISTLQQVKEEEVSNTFSAPLNATGNFSSANPASIDLAYLDLQKLLTLPDHSKETQEKTSSQRELFEQKSSVASASKDNVSSSSILQGSASSKLLPDQSARQHQVLVGQTAIPTSEASSSINNTPLQAPVSSFADQNAFTNPLSTFASPDLASVSSPSLSSYKGAQSPNANSKRTKATSAIRTAAEEDKRRRNTAASARFRIKKKLKEQQLERTAKELTEKVAILETRVRELEMENNWLKGLIRPTSNF</sequence>
<reference key="1">
    <citation type="journal article" date="1999" name="Mol. Gen. Genet.">
        <title>Isolation of multicopy suppressors of the calcium sensitivity of a mutant lacking the bZIP transcription factor Atf1 in fission yeast.</title>
        <authorList>
            <person name="Ohmiya R."/>
            <person name="Kato C."/>
            <person name="Yamada H."/>
            <person name="Aiba H."/>
            <person name="Mizuno T."/>
        </authorList>
    </citation>
    <scope>NUCLEOTIDE SEQUENCE [GENOMIC DNA]</scope>
</reference>
<reference key="2">
    <citation type="journal article" date="2002" name="Nature">
        <title>The genome sequence of Schizosaccharomyces pombe.</title>
        <authorList>
            <person name="Wood V."/>
            <person name="Gwilliam R."/>
            <person name="Rajandream M.A."/>
            <person name="Lyne M.H."/>
            <person name="Lyne R."/>
            <person name="Stewart A."/>
            <person name="Sgouros J.G."/>
            <person name="Peat N."/>
            <person name="Hayles J."/>
            <person name="Baker S.G."/>
            <person name="Basham D."/>
            <person name="Bowman S."/>
            <person name="Brooks K."/>
            <person name="Brown D."/>
            <person name="Brown S."/>
            <person name="Chillingworth T."/>
            <person name="Churcher C.M."/>
            <person name="Collins M."/>
            <person name="Connor R."/>
            <person name="Cronin A."/>
            <person name="Davis P."/>
            <person name="Feltwell T."/>
            <person name="Fraser A."/>
            <person name="Gentles S."/>
            <person name="Goble A."/>
            <person name="Hamlin N."/>
            <person name="Harris D.E."/>
            <person name="Hidalgo J."/>
            <person name="Hodgson G."/>
            <person name="Holroyd S."/>
            <person name="Hornsby T."/>
            <person name="Howarth S."/>
            <person name="Huckle E.J."/>
            <person name="Hunt S."/>
            <person name="Jagels K."/>
            <person name="James K.D."/>
            <person name="Jones L."/>
            <person name="Jones M."/>
            <person name="Leather S."/>
            <person name="McDonald S."/>
            <person name="McLean J."/>
            <person name="Mooney P."/>
            <person name="Moule S."/>
            <person name="Mungall K.L."/>
            <person name="Murphy L.D."/>
            <person name="Niblett D."/>
            <person name="Odell C."/>
            <person name="Oliver K."/>
            <person name="O'Neil S."/>
            <person name="Pearson D."/>
            <person name="Quail M.A."/>
            <person name="Rabbinowitsch E."/>
            <person name="Rutherford K.M."/>
            <person name="Rutter S."/>
            <person name="Saunders D."/>
            <person name="Seeger K."/>
            <person name="Sharp S."/>
            <person name="Skelton J."/>
            <person name="Simmonds M.N."/>
            <person name="Squares R."/>
            <person name="Squares S."/>
            <person name="Stevens K."/>
            <person name="Taylor K."/>
            <person name="Taylor R.G."/>
            <person name="Tivey A."/>
            <person name="Walsh S.V."/>
            <person name="Warren T."/>
            <person name="Whitehead S."/>
            <person name="Woodward J.R."/>
            <person name="Volckaert G."/>
            <person name="Aert R."/>
            <person name="Robben J."/>
            <person name="Grymonprez B."/>
            <person name="Weltjens I."/>
            <person name="Vanstreels E."/>
            <person name="Rieger M."/>
            <person name="Schaefer M."/>
            <person name="Mueller-Auer S."/>
            <person name="Gabel C."/>
            <person name="Fuchs M."/>
            <person name="Duesterhoeft A."/>
            <person name="Fritzc C."/>
            <person name="Holzer E."/>
            <person name="Moestl D."/>
            <person name="Hilbert H."/>
            <person name="Borzym K."/>
            <person name="Langer I."/>
            <person name="Beck A."/>
            <person name="Lehrach H."/>
            <person name="Reinhardt R."/>
            <person name="Pohl T.M."/>
            <person name="Eger P."/>
            <person name="Zimmermann W."/>
            <person name="Wedler H."/>
            <person name="Wambutt R."/>
            <person name="Purnelle B."/>
            <person name="Goffeau A."/>
            <person name="Cadieu E."/>
            <person name="Dreano S."/>
            <person name="Gloux S."/>
            <person name="Lelaure V."/>
            <person name="Mottier S."/>
            <person name="Galibert F."/>
            <person name="Aves S.J."/>
            <person name="Xiang Z."/>
            <person name="Hunt C."/>
            <person name="Moore K."/>
            <person name="Hurst S.M."/>
            <person name="Lucas M."/>
            <person name="Rochet M."/>
            <person name="Gaillardin C."/>
            <person name="Tallada V.A."/>
            <person name="Garzon A."/>
            <person name="Thode G."/>
            <person name="Daga R.R."/>
            <person name="Cruzado L."/>
            <person name="Jimenez J."/>
            <person name="Sanchez M."/>
            <person name="del Rey F."/>
            <person name="Benito J."/>
            <person name="Dominguez A."/>
            <person name="Revuelta J.L."/>
            <person name="Moreno S."/>
            <person name="Armstrong J."/>
            <person name="Forsburg S.L."/>
            <person name="Cerutti L."/>
            <person name="Lowe T."/>
            <person name="McCombie W.R."/>
            <person name="Paulsen I."/>
            <person name="Potashkin J."/>
            <person name="Shpakovski G.V."/>
            <person name="Ussery D."/>
            <person name="Barrell B.G."/>
            <person name="Nurse P."/>
        </authorList>
    </citation>
    <scope>NUCLEOTIDE SEQUENCE [LARGE SCALE GENOMIC DNA]</scope>
    <source>
        <strain>972 / ATCC 24843</strain>
    </source>
</reference>
<reference key="3">
    <citation type="journal article" date="2005" name="EMBO J.">
        <title>SCF(Pof1)-ubiquitin and its target Zip1 transcription factor mediate cadmium response in fission yeast.</title>
        <authorList>
            <person name="Harrison C."/>
            <person name="Katayama S."/>
            <person name="Dhut S."/>
            <person name="Chen D."/>
            <person name="Jones N."/>
            <person name="Bahler J."/>
            <person name="Toda T."/>
        </authorList>
    </citation>
    <scope>FUNCTION</scope>
    <scope>INTERACTION WITH POF1</scope>
</reference>
<reference key="4">
    <citation type="journal article" date="2006" name="Nat. Biotechnol.">
        <title>ORFeome cloning and global analysis of protein localization in the fission yeast Schizosaccharomyces pombe.</title>
        <authorList>
            <person name="Matsuyama A."/>
            <person name="Arai R."/>
            <person name="Yashiroda Y."/>
            <person name="Shirai A."/>
            <person name="Kamata A."/>
            <person name="Sekido S."/>
            <person name="Kobayashi Y."/>
            <person name="Hashimoto A."/>
            <person name="Hamamoto M."/>
            <person name="Hiraoka Y."/>
            <person name="Horinouchi S."/>
            <person name="Yoshida M."/>
        </authorList>
    </citation>
    <scope>SUBCELLULAR LOCATION [LARGE SCALE ANALYSIS]</scope>
</reference>
<feature type="chain" id="PRO_0000076540" description="Transcription factor zip1">
    <location>
        <begin position="1"/>
        <end position="330"/>
    </location>
</feature>
<feature type="domain" description="bZIP" evidence="1">
    <location>
        <begin position="264"/>
        <end position="327"/>
    </location>
</feature>
<feature type="region of interest" description="Disordered" evidence="2">
    <location>
        <begin position="133"/>
        <end position="165"/>
    </location>
</feature>
<feature type="region of interest" description="Disordered" evidence="2">
    <location>
        <begin position="238"/>
        <end position="277"/>
    </location>
</feature>
<feature type="region of interest" description="Basic motif" evidence="1">
    <location>
        <begin position="270"/>
        <end position="288"/>
    </location>
</feature>
<feature type="region of interest" description="Leucine-zipper" evidence="1">
    <location>
        <begin position="292"/>
        <end position="320"/>
    </location>
</feature>
<feature type="compositionally biased region" description="Basic and acidic residues" evidence="2">
    <location>
        <begin position="133"/>
        <end position="148"/>
    </location>
</feature>
<feature type="compositionally biased region" description="Low complexity" evidence="2">
    <location>
        <begin position="150"/>
        <end position="165"/>
    </location>
</feature>
<feature type="compositionally biased region" description="Polar residues" evidence="2">
    <location>
        <begin position="244"/>
        <end position="262"/>
    </location>
</feature>
<evidence type="ECO:0000255" key="1">
    <source>
        <dbReference type="PROSITE-ProRule" id="PRU00978"/>
    </source>
</evidence>
<evidence type="ECO:0000256" key="2">
    <source>
        <dbReference type="SAM" id="MobiDB-lite"/>
    </source>
</evidence>
<evidence type="ECO:0000269" key="3">
    <source>
    </source>
</evidence>
<evidence type="ECO:0000269" key="4">
    <source>
    </source>
</evidence>
<evidence type="ECO:0000305" key="5"/>
<proteinExistence type="evidence at protein level"/>
<organism>
    <name type="scientific">Schizosaccharomyces pombe (strain 972 / ATCC 24843)</name>
    <name type="common">Fission yeast</name>
    <dbReference type="NCBI Taxonomy" id="284812"/>
    <lineage>
        <taxon>Eukaryota</taxon>
        <taxon>Fungi</taxon>
        <taxon>Dikarya</taxon>
        <taxon>Ascomycota</taxon>
        <taxon>Taphrinomycotina</taxon>
        <taxon>Schizosaccharomycetes</taxon>
        <taxon>Schizosaccharomycetales</taxon>
        <taxon>Schizosaccharomycetaceae</taxon>
        <taxon>Schizosaccharomyces</taxon>
    </lineage>
</organism>
<comment type="function">
    <text evidence="3">Mediates cell growth arrest in response to cadmium exposure, which is essential to maintain cell viability. Regulates cadmium stress specific genes.</text>
</comment>
<comment type="subunit">
    <text evidence="3">Interacts with pof1.</text>
</comment>
<comment type="subcellular location">
    <subcellularLocation>
        <location evidence="1 4">Nucleus</location>
    </subcellularLocation>
</comment>
<comment type="induction">
    <text>Ubiquitinated by pof1.</text>
</comment>
<comment type="similarity">
    <text evidence="5">Belongs to the bZIP family.</text>
</comment>
<dbReference type="EMBL" id="CU329670">
    <property type="protein sequence ID" value="CAA94632.1"/>
    <property type="molecule type" value="Genomic_DNA"/>
</dbReference>
<dbReference type="PIR" id="T38374">
    <property type="entry name" value="T38374"/>
</dbReference>
<dbReference type="RefSeq" id="NP_594523.1">
    <property type="nucleotide sequence ID" value="NM_001019952.2"/>
</dbReference>
<dbReference type="SMR" id="Q10424"/>
<dbReference type="BioGRID" id="279160">
    <property type="interactions" value="34"/>
</dbReference>
<dbReference type="FunCoup" id="Q10424">
    <property type="interactions" value="270"/>
</dbReference>
<dbReference type="IntAct" id="Q10424">
    <property type="interactions" value="1"/>
</dbReference>
<dbReference type="STRING" id="284812.Q10424"/>
<dbReference type="iPTMnet" id="Q10424"/>
<dbReference type="PaxDb" id="4896-SPAC25G10.03.1"/>
<dbReference type="EnsemblFungi" id="SPAC25G10.03.1">
    <property type="protein sequence ID" value="SPAC25G10.03.1:pep"/>
    <property type="gene ID" value="SPAC25G10.03"/>
</dbReference>
<dbReference type="PomBase" id="SPAC25G10.03">
    <property type="gene designation" value="zip1"/>
</dbReference>
<dbReference type="VEuPathDB" id="FungiDB:SPAC25G10.03"/>
<dbReference type="eggNOG" id="ENOG502S7ZI">
    <property type="taxonomic scope" value="Eukaryota"/>
</dbReference>
<dbReference type="HOGENOM" id="CLU_874818_0_0_1"/>
<dbReference type="InParanoid" id="Q10424"/>
<dbReference type="OMA" id="LEMENNW"/>
<dbReference type="PRO" id="PR:Q10424"/>
<dbReference type="Proteomes" id="UP000002485">
    <property type="component" value="Chromosome I"/>
</dbReference>
<dbReference type="GO" id="GO:0005634">
    <property type="term" value="C:nucleus"/>
    <property type="evidence" value="ECO:0000314"/>
    <property type="project" value="PomBase"/>
</dbReference>
<dbReference type="GO" id="GO:0001228">
    <property type="term" value="F:DNA-binding transcription activator activity, RNA polymerase II-specific"/>
    <property type="evidence" value="ECO:0000314"/>
    <property type="project" value="PomBase"/>
</dbReference>
<dbReference type="GO" id="GO:0000978">
    <property type="term" value="F:RNA polymerase II cis-regulatory region sequence-specific DNA binding"/>
    <property type="evidence" value="ECO:0000255"/>
    <property type="project" value="PomBase"/>
</dbReference>
<dbReference type="GO" id="GO:0000977">
    <property type="term" value="F:RNA polymerase II transcription regulatory region sequence-specific DNA binding"/>
    <property type="evidence" value="ECO:0000318"/>
    <property type="project" value="GO_Central"/>
</dbReference>
<dbReference type="GO" id="GO:0045944">
    <property type="term" value="P:positive regulation of transcription by RNA polymerase II"/>
    <property type="evidence" value="ECO:0000315"/>
    <property type="project" value="PomBase"/>
</dbReference>
<dbReference type="GO" id="GO:0006357">
    <property type="term" value="P:regulation of transcription by RNA polymerase II"/>
    <property type="evidence" value="ECO:0000318"/>
    <property type="project" value="GO_Central"/>
</dbReference>
<dbReference type="CDD" id="cd14705">
    <property type="entry name" value="bZIP_Zip1"/>
    <property type="match status" value="1"/>
</dbReference>
<dbReference type="FunFam" id="1.20.5.170:FF:000075">
    <property type="entry name" value="BZIP transcription factor (MetR)"/>
    <property type="match status" value="1"/>
</dbReference>
<dbReference type="Gene3D" id="1.20.5.170">
    <property type="match status" value="1"/>
</dbReference>
<dbReference type="InterPro" id="IPR004827">
    <property type="entry name" value="bZIP"/>
</dbReference>
<dbReference type="InterPro" id="IPR046347">
    <property type="entry name" value="bZIP_sf"/>
</dbReference>
<dbReference type="PANTHER" id="PTHR13044">
    <property type="entry name" value="ACTIVATING TRANSCRIPTION FACTOR ATF 4/5"/>
    <property type="match status" value="1"/>
</dbReference>
<dbReference type="PANTHER" id="PTHR13044:SF14">
    <property type="entry name" value="CRYPTOCEPHAL, ISOFORM A"/>
    <property type="match status" value="1"/>
</dbReference>
<dbReference type="Pfam" id="PF07716">
    <property type="entry name" value="bZIP_2"/>
    <property type="match status" value="1"/>
</dbReference>
<dbReference type="SUPFAM" id="SSF57959">
    <property type="entry name" value="Leucine zipper domain"/>
    <property type="match status" value="1"/>
</dbReference>
<dbReference type="PROSITE" id="PS50217">
    <property type="entry name" value="BZIP"/>
    <property type="match status" value="1"/>
</dbReference>
<dbReference type="PROSITE" id="PS00036">
    <property type="entry name" value="BZIP_BASIC"/>
    <property type="match status" value="1"/>
</dbReference>
<protein>
    <recommendedName>
        <fullName>Transcription factor zip1</fullName>
    </recommendedName>
</protein>
<accession>Q10424</accession>
<name>ZIP1_SCHPO</name>